<protein>
    <recommendedName>
        <fullName>Myosin-4</fullName>
    </recommendedName>
    <alternativeName>
        <fullName>Myosin heavy chain B</fullName>
        <shortName>MHC B</shortName>
    </alternativeName>
    <alternativeName>
        <fullName>Uncoordinated protein 54</fullName>
    </alternativeName>
</protein>
<name>MYO4_CAEEL</name>
<feature type="chain" id="PRO_0000123383" description="Myosin-4">
    <location>
        <begin position="1"/>
        <end position="1963"/>
    </location>
</feature>
<feature type="domain" description="Myosin N-terminal SH3-like" evidence="4">
    <location>
        <begin position="28"/>
        <end position="77"/>
    </location>
</feature>
<feature type="domain" description="Myosin motor" evidence="3">
    <location>
        <begin position="81"/>
        <end position="787"/>
    </location>
</feature>
<feature type="region of interest" description="Actin-binding">
    <location>
        <begin position="662"/>
        <end position="684"/>
    </location>
</feature>
<feature type="region of interest" description="Actin-binding">
    <location>
        <begin position="766"/>
        <end position="780"/>
    </location>
</feature>
<feature type="region of interest" description="Alpha-helical tailpiece (S2)">
    <location>
        <begin position="848"/>
        <end position="1161"/>
    </location>
</feature>
<feature type="region of interest" description="Disordered" evidence="5">
    <location>
        <begin position="970"/>
        <end position="990"/>
    </location>
</feature>
<feature type="region of interest" description="Disordered" evidence="5">
    <location>
        <begin position="1125"/>
        <end position="1146"/>
    </location>
</feature>
<feature type="region of interest" description="Light meromyosin (LMM)">
    <location>
        <begin position="1162"/>
        <end position="1963"/>
    </location>
</feature>
<feature type="region of interest" description="Hinge">
    <location>
        <begin position="1162"/>
        <end position="1173"/>
    </location>
</feature>
<feature type="region of interest" description="Disordered" evidence="5">
    <location>
        <begin position="1317"/>
        <end position="1336"/>
    </location>
</feature>
<feature type="region of interest" description="Disordered" evidence="5">
    <location>
        <begin position="1912"/>
        <end position="1963"/>
    </location>
</feature>
<feature type="coiled-coil region" evidence="2">
    <location>
        <begin position="848"/>
        <end position="1963"/>
    </location>
</feature>
<feature type="compositionally biased region" description="Basic and acidic residues" evidence="5">
    <location>
        <begin position="970"/>
        <end position="988"/>
    </location>
</feature>
<feature type="compositionally biased region" description="Basic and acidic residues" evidence="5">
    <location>
        <begin position="1133"/>
        <end position="1146"/>
    </location>
</feature>
<feature type="compositionally biased region" description="Basic and acidic residues" evidence="5">
    <location>
        <begin position="1322"/>
        <end position="1336"/>
    </location>
</feature>
<feature type="binding site" evidence="1">
    <location>
        <begin position="174"/>
        <end position="181"/>
    </location>
    <ligand>
        <name>ATP</name>
        <dbReference type="ChEBI" id="CHEBI:30616"/>
    </ligand>
</feature>
<feature type="modified residue" description="N6,N6,N6-trimethyllysine" evidence="2">
    <location>
        <position position="125"/>
    </location>
</feature>
<feature type="sequence conflict" description="In Ref. 3." evidence="9" ref="3">
    <original>E</original>
    <variation>R</variation>
    <location>
        <position position="1334"/>
    </location>
</feature>
<feature type="sequence conflict" description="In Ref. 3." evidence="9" ref="3">
    <original>I</original>
    <variation>L</variation>
    <location>
        <position position="1877"/>
    </location>
</feature>
<feature type="helix" evidence="10">
    <location>
        <begin position="3"/>
        <end position="5"/>
    </location>
</feature>
<feature type="helix" evidence="10">
    <location>
        <begin position="7"/>
        <end position="11"/>
    </location>
</feature>
<feature type="helix" evidence="10">
    <location>
        <begin position="16"/>
        <end position="22"/>
    </location>
</feature>
<feature type="turn" evidence="10">
    <location>
        <begin position="29"/>
        <end position="31"/>
    </location>
</feature>
<feature type="strand" evidence="10">
    <location>
        <begin position="32"/>
        <end position="37"/>
    </location>
</feature>
<feature type="turn" evidence="10">
    <location>
        <begin position="38"/>
        <end position="40"/>
    </location>
</feature>
<feature type="strand" evidence="10">
    <location>
        <begin position="41"/>
        <end position="51"/>
    </location>
</feature>
<feature type="strand" evidence="10">
    <location>
        <begin position="54"/>
        <end position="59"/>
    </location>
</feature>
<feature type="strand" evidence="10">
    <location>
        <begin position="64"/>
        <end position="68"/>
    </location>
</feature>
<feature type="helix" evidence="10">
    <location>
        <begin position="69"/>
        <end position="71"/>
    </location>
</feature>
<feature type="helix" evidence="10">
    <location>
        <begin position="78"/>
        <end position="80"/>
    </location>
</feature>
<feature type="helix" evidence="10">
    <location>
        <begin position="86"/>
        <end position="88"/>
    </location>
</feature>
<feature type="helix" evidence="10">
    <location>
        <begin position="94"/>
        <end position="106"/>
    </location>
</feature>
<feature type="strand" evidence="10">
    <location>
        <begin position="111"/>
        <end position="114"/>
    </location>
</feature>
<feature type="strand" evidence="10">
    <location>
        <begin position="117"/>
        <end position="121"/>
    </location>
</feature>
<feature type="helix" evidence="10">
    <location>
        <begin position="132"/>
        <end position="138"/>
    </location>
</feature>
<feature type="helix" evidence="10">
    <location>
        <begin position="143"/>
        <end position="145"/>
    </location>
</feature>
<feature type="helix" evidence="10">
    <location>
        <begin position="150"/>
        <end position="164"/>
    </location>
</feature>
<feature type="strand" evidence="10">
    <location>
        <begin position="168"/>
        <end position="173"/>
    </location>
</feature>
<feature type="helix" evidence="10">
    <location>
        <begin position="180"/>
        <end position="194"/>
    </location>
</feature>
<feature type="helix" evidence="10">
    <location>
        <begin position="214"/>
        <end position="229"/>
    </location>
</feature>
<feature type="strand" evidence="10">
    <location>
        <begin position="242"/>
        <end position="250"/>
    </location>
</feature>
<feature type="strand" evidence="10">
    <location>
        <begin position="256"/>
        <end position="264"/>
    </location>
</feature>
<feature type="helix" evidence="10">
    <location>
        <begin position="268"/>
        <end position="271"/>
    </location>
</feature>
<feature type="helix" evidence="10">
    <location>
        <begin position="283"/>
        <end position="288"/>
    </location>
</feature>
<feature type="helix" evidence="10">
    <location>
        <begin position="293"/>
        <end position="298"/>
    </location>
</feature>
<feature type="helix" evidence="10">
    <location>
        <begin position="305"/>
        <end position="307"/>
    </location>
</feature>
<feature type="turn" evidence="10">
    <location>
        <begin position="309"/>
        <end position="311"/>
    </location>
</feature>
<feature type="helix" evidence="10">
    <location>
        <begin position="323"/>
        <end position="336"/>
    </location>
</feature>
<feature type="helix" evidence="10">
    <location>
        <begin position="341"/>
        <end position="357"/>
    </location>
</feature>
<feature type="strand" evidence="10">
    <location>
        <begin position="372"/>
        <end position="374"/>
    </location>
</feature>
<feature type="helix" evidence="10">
    <location>
        <begin position="377"/>
        <end position="386"/>
    </location>
</feature>
<feature type="helix" evidence="10">
    <location>
        <begin position="390"/>
        <end position="398"/>
    </location>
</feature>
<feature type="strand" evidence="10">
    <location>
        <begin position="401"/>
        <end position="403"/>
    </location>
</feature>
<feature type="strand" evidence="10">
    <location>
        <begin position="408"/>
        <end position="410"/>
    </location>
</feature>
<feature type="helix" evidence="10">
    <location>
        <begin position="415"/>
        <end position="444"/>
    </location>
</feature>
<feature type="strand" evidence="10">
    <location>
        <begin position="448"/>
        <end position="450"/>
    </location>
</feature>
<feature type="strand" evidence="10">
    <location>
        <begin position="454"/>
        <end position="460"/>
    </location>
</feature>
<feature type="strand" evidence="10">
    <location>
        <begin position="468"/>
        <end position="470"/>
    </location>
</feature>
<feature type="helix" evidence="10">
    <location>
        <begin position="472"/>
        <end position="503"/>
    </location>
</feature>
<feature type="helix" evidence="10">
    <location>
        <begin position="512"/>
        <end position="516"/>
    </location>
</feature>
<feature type="helix" evidence="10">
    <location>
        <begin position="517"/>
        <end position="524"/>
    </location>
</feature>
<feature type="helix" evidence="10">
    <location>
        <begin position="529"/>
        <end position="536"/>
    </location>
</feature>
<feature type="helix" evidence="10">
    <location>
        <begin position="544"/>
        <end position="555"/>
    </location>
</feature>
<feature type="turn" evidence="10">
    <location>
        <begin position="556"/>
        <end position="558"/>
    </location>
</feature>
<feature type="strand" evidence="10">
    <location>
        <begin position="576"/>
        <end position="581"/>
    </location>
</feature>
<feature type="strand" evidence="10">
    <location>
        <begin position="584"/>
        <end position="588"/>
    </location>
</feature>
<feature type="helix" evidence="10">
    <location>
        <begin position="593"/>
        <end position="598"/>
    </location>
</feature>
<feature type="helix" evidence="10">
    <location>
        <begin position="603"/>
        <end position="610"/>
    </location>
</feature>
<feature type="helix" evidence="10">
    <location>
        <begin position="616"/>
        <end position="621"/>
    </location>
</feature>
<feature type="turn" evidence="10">
    <location>
        <begin position="622"/>
        <end position="624"/>
    </location>
</feature>
<feature type="helix" evidence="10">
    <location>
        <begin position="628"/>
        <end position="631"/>
    </location>
</feature>
<feature type="helix" evidence="10">
    <location>
        <begin position="654"/>
        <end position="669"/>
    </location>
</feature>
<feature type="strand" evidence="10">
    <location>
        <begin position="672"/>
        <end position="680"/>
    </location>
</feature>
<feature type="helix" evidence="10">
    <location>
        <begin position="693"/>
        <end position="702"/>
    </location>
</feature>
<feature type="helix" evidence="10">
    <location>
        <begin position="705"/>
        <end position="714"/>
    </location>
</feature>
<feature type="strand" evidence="10">
    <location>
        <begin position="718"/>
        <end position="721"/>
    </location>
</feature>
<feature type="helix" evidence="10">
    <location>
        <begin position="722"/>
        <end position="729"/>
    </location>
</feature>
<feature type="helix" evidence="10">
    <location>
        <begin position="730"/>
        <end position="732"/>
    </location>
</feature>
<feature type="helix" evidence="10">
    <location>
        <begin position="734"/>
        <end position="737"/>
    </location>
</feature>
<feature type="helix" evidence="10">
    <location>
        <begin position="743"/>
        <end position="757"/>
    </location>
</feature>
<feature type="helix" evidence="10">
    <location>
        <begin position="762"/>
        <end position="764"/>
    </location>
</feature>
<feature type="strand" evidence="10">
    <location>
        <begin position="765"/>
        <end position="767"/>
    </location>
</feature>
<feature type="strand" evidence="10">
    <location>
        <begin position="769"/>
        <end position="774"/>
    </location>
</feature>
<feature type="helix" evidence="10">
    <location>
        <begin position="778"/>
        <end position="789"/>
    </location>
</feature>
<gene>
    <name type="primary">unc-54</name>
    <name type="synonym">myo-4</name>
    <name type="ORF">F11C3.3</name>
</gene>
<organism>
    <name type="scientific">Caenorhabditis elegans</name>
    <dbReference type="NCBI Taxonomy" id="6239"/>
    <lineage>
        <taxon>Eukaryota</taxon>
        <taxon>Metazoa</taxon>
        <taxon>Ecdysozoa</taxon>
        <taxon>Nematoda</taxon>
        <taxon>Chromadorea</taxon>
        <taxon>Rhabditida</taxon>
        <taxon>Rhabditina</taxon>
        <taxon>Rhabditomorpha</taxon>
        <taxon>Rhabditoidea</taxon>
        <taxon>Rhabditidae</taxon>
        <taxon>Peloderinae</taxon>
        <taxon>Caenorhabditis</taxon>
    </lineage>
</organism>
<sequence>MEHEKDPGWQYLRRTREQVLEDQSKPYDSKKNVWIPDPEEGYLAGEITATKGDQVTIVTARGNEVTLKKELVQEMNPPKFEKTEDMSNLSFLNDASVLHNLRSRYAAMLIYTYSGLFCVVINPYKRLPIYTDSCARMFMGKRKTEMPPHLFAVSDEAYRNMLQDHENQSMLITGESGAGKTENTKKVICYFAAVGASQQEGGAEVDPNKKKVTLEDQIVQTNPVLEAFGNAKTVRNNNSSRFGKFIRIHFNKHGRLASCDIEHYLLEKSRVIRQAPGERCYHIFYQIYSDFRPELKKELLLDLPIKDYWFVAQAELIIDGIDDVEEFQLTDEAFDILNFSAVEKQDCYRLMSAHMHMGNMKFKQRPREEQAEPDGTDEAEKASNMYGIGCEEFLKALTKPRVKVGTEWVSKGQNCEQVNWAVGAMAKGLYSRVFNWLVKKCNLTLDQKGIDRDYFIGVLDIAGFEIFDFNSFEQLWINFVNEKLQQFFNHHMFVLEQEEYAREGIQWVFIDFGLDLQACIELIEKPLGIISMLDEECIVPKATDLTLASKLVDQHLGKHPNFEKPKPPKGKQGEAHFAMRHYAGTVRYNCLNWLEKNKDPLNDTVVSAMKQSKGNDLLVEIWQDYTTQEEAAAKAKEGGGGGKKKGKSGSFMTVSMLYRESLNNLMTMLNKTHPHFIRCIIPNEKKQSGMIDAALVLNQLTCNGVLEGIRICRKGFPNRTLHPDFVQRYAILAAKEAKSDDDKKKCAEAIMSKLVNDGSLSEEMFRIGLTKVFFKAGVLAHLEDIRDEKLATILTGFQSQIRWHLGLKDRKRRMEQRAGLLIVQRNVRSWCTLRTWEWFKLYGKVKPMLKAGKEAEELEKINDKVKALEDSLAKEEKLRKELEESSAKLVEEKTSLFTNLESTKTQLSDAEERLAKLEAQQKDASKQLSELNDQLADNEDRTADVQRAKKKIEAEVEALKKQIQDLEMSLRKAESEKQSKDHQIRSLQDEMQQQDEAIAKLNKEKKHQEEINRKLMEDLQSEEDKGNHQNKVKAKLEQTLDDLEDSLEREKRARADLDKQKRKVEGELKIAQENIDESGRQRHDLENNLKKKESELHSVSSRLEDEQALVSKLQRQIKDGQSRISELEEELENERQSRSKADRAKSDLQRELEELGEKLDEQGGATAAQVEVNKKREAELAKLRRDLEEANMNHENQLGGLRKKHTDAVAELTDQLDQLNKAKAKVEKDKAQAVRDAEDLAAQLDQETSGKLNNEKLAKQFELQLTELQSKADEQSRQLQDFTSLKGRLHSENGDLVRQLEDAESQVNQLTRLKSQLTSQLEEARRTADEEARERQTVAAQAKNYQHEAEQLQESLEEEIEGKNEILRQLSKANADIQQWKARFEGEGLLKADELEDAKRRQAQKINELQEALDAANSKNASLEKTKSRLVGDLDDAQVDVERANGVASALEKKQKGFDKIIDEWRKKTDDLAAELDGAQRDLRNTSTDLFKAKNAQEELAEVVEGLRRENKSLSQEIKDLTDQLGEGGRSVHEMQKIIRRLEIEKEELQHALDEAEAALEAEESKVLRAQVEVSQIRSEIEKRIQEKEEEFENTRKNHARALESMQASLETEAKGKAELLRIKKKLEGDINELEIALDHANKANADAQKNLKRYQEQVRELQLQVEEEQRNGADTREQFFNAEKRATLLQSEKEELLVANEAAERARKQAEYEAADARDQANEANAQVSSLTSAKRKLEGEIQAIHADLDETLNEYKAAEERSKKAIADATRLAEELRQEQEHSQHVDRLRKGLEQQLKEIQVRLDEAEAAALKGGKKVIAKLEQRVRELESELDGEQRRFQDANKNLGRADRRVRELQFQVDEDKKNFERLQDLIDKLQQKLKTQKKQVEEAEELANLNLQKYKQLTHQLEDAEERADQAENSLSKMRSKSRASASVAPGLQSSASAAVIRSPSRARASDF</sequence>
<proteinExistence type="evidence at protein level"/>
<reference key="1">
    <citation type="journal article" date="1983" name="Proc. Natl. Acad. Sci. U.S.A.">
        <title>Protein structural domains in the Caenorhabditis elegans unc-54 myosin heavy chain gene are not separated by introns.</title>
        <authorList>
            <person name="Karn J."/>
            <person name="Brenner S."/>
            <person name="Barnett L."/>
        </authorList>
    </citation>
    <scope>NUCLEOTIDE SEQUENCE [GENOMIC DNA]</scope>
</reference>
<reference key="2">
    <citation type="journal article" date="1998" name="Science">
        <title>Genome sequence of the nematode C. elegans: a platform for investigating biology.</title>
        <authorList>
            <consortium name="The C. elegans sequencing consortium"/>
        </authorList>
    </citation>
    <scope>NUCLEOTIDE SEQUENCE [LARGE SCALE GENOMIC DNA]</scope>
    <source>
        <strain>Bristol N2</strain>
    </source>
</reference>
<reference key="3">
    <citation type="journal article" date="1982" name="Nature">
        <title>Periodic charge distributions in the myosin rod amino acid sequence match cross-bridge spacings in muscle.</title>
        <authorList>
            <person name="McLachlan A.D."/>
            <person name="Karn J."/>
        </authorList>
    </citation>
    <scope>NUCLEOTIDE SEQUENCE [GENOMIC DNA] OF 847-1963</scope>
</reference>
<reference key="4">
    <citation type="journal article" date="1983" name="Cell">
        <title>The genes sup-7 X and sup-5 III of C. elegans suppress amber nonsense mutations via altered transfer RNA.</title>
        <authorList>
            <person name="Wills N."/>
            <person name="Gesteland R.F."/>
            <person name="Karn J."/>
            <person name="Barnett L."/>
            <person name="Bolten S."/>
            <person name="Waterston R.H."/>
        </authorList>
    </citation>
    <scope>NUCLEOTIDE SEQUENCE [GENOMIC DNA] OF 1873-1963</scope>
</reference>
<reference key="5">
    <citation type="journal article" date="2002" name="Curr. Biol.">
        <title>A direct interaction between IP(3) receptors and myosin II regulates IP(3) signaling in C. elegans.</title>
        <authorList>
            <person name="Walker D.S."/>
            <person name="Ly S."/>
            <person name="Lockwood K.C."/>
            <person name="Baylis H.A."/>
        </authorList>
    </citation>
    <scope>INTERACTION WITH ITR-1</scope>
</reference>
<reference key="6">
    <citation type="journal article" date="2016" name="PLoS Genet.">
        <title>The MADD-3 LAMMER kinase interacts with a p38 MAP kinase pathway to regulate the display of the EVA-1 guidance receptor in Caenorhabditis elegans.</title>
        <authorList>
            <person name="D'Souza S.A."/>
            <person name="Rajendran L."/>
            <person name="Bagg R."/>
            <person name="Barbier L."/>
            <person name="van Pel D.M."/>
            <person name="Moshiri H."/>
            <person name="Roy P.J."/>
        </authorList>
    </citation>
    <scope>FUNCTION</scope>
    <scope>DISRUPTION PHENOTYPE</scope>
</reference>
<reference key="7">
    <citation type="journal article" date="2018" name="Nat. Commun.">
        <title>UFD-2 is an adaptor-assisted E3 ligase targeting unfolded proteins.</title>
        <authorList>
            <person name="Hellerschmied D."/>
            <person name="Roessler M."/>
            <person name="Lehner A."/>
            <person name="Gazda L."/>
            <person name="Stejskal K."/>
            <person name="Imre R."/>
            <person name="Mechtler K."/>
            <person name="Dammermann A."/>
            <person name="Clausen T."/>
        </authorList>
    </citation>
    <scope>IDENTIFICATION IN A COMPLEX WITH UNC-45 AND UFD-2</scope>
    <scope>INTERACTION WITH UNC-45 AND UFD-2</scope>
    <scope>UBIQUITINATION</scope>
</reference>
<comment type="function">
    <text evidence="7">Required for muscle contraction.</text>
</comment>
<comment type="subunit">
    <text evidence="6 8">Muscle myosin is a hexameric protein that consists of 2 heavy chain subunits (MHC), 2 alkali light chain subunits (MLC) and 2 regulatory light chain subunits (MLC-2). Forms a complex composed of chaperone unc-45, unc-54 and ubiquitin-protein ligase ufd-2; promotes poly-ubiquitination of unfolded unc-54 (PubMed:29396393). Within the complex interacts with unc-45 (via UCS domain) and ufd-2 (PubMed:29396393). Interacts with itr-1 (via c-terminal coiled coil domain) (PubMed:12062062).</text>
</comment>
<comment type="interaction">
    <interactant intactId="EBI-329238">
        <id>P02566</id>
    </interactant>
    <interactant intactId="EBI-6675165">
        <id>G5EG62</id>
        <label>unc-45</label>
    </interactant>
    <organismsDiffer>false</organismsDiffer>
    <experiments>3</experiments>
</comment>
<comment type="subcellular location">
    <subcellularLocation>
        <location>Cytoplasm</location>
        <location>Myofibril</location>
    </subcellularLocation>
    <text>Thick filaments of the myofibrils.</text>
</comment>
<comment type="domain">
    <text>The rodlike tail sequence is highly repetitive, showing cycles of a 28-residue repeat pattern composed of 4 heptapeptides, characteristic for alpha-helical coiled coils.</text>
</comment>
<comment type="domain">
    <text evidence="9">Limited proteolysis of myosin heavy chain produces 1 light meromyosin (LMM) and 1 heavy meromyosin (HMM). HMM can be further cleaved into 2 globular subfragments (S1) and 1 rod-shaped subfragment (S2).</text>
</comment>
<comment type="PTM">
    <text evidence="8">Unfolded unc-54 is poly-ubiquitinated by ufd-2.</text>
</comment>
<comment type="disruption phenotype">
    <text evidence="7">Viable, but paralyzed. Double knockout with madd-3 results in lethality. Triple knockout with madd-3, and either cebp-1, dlk-1, mak-2, pmk-3 or sek-3 results in paralysis (as in the unc-54 single knockout), and suppresses the lethality phenotype in the double madd-3 and unc-54 mutant.</text>
</comment>
<comment type="miscellaneous">
    <text>There are four different myosin heavy chains in C.elegans.</text>
</comment>
<comment type="miscellaneous">
    <text>MHC A and MHC B are found exclusively in the body wall muscle. They co-assemble into body wall thick filament.</text>
</comment>
<comment type="similarity">
    <text evidence="9">Belongs to the TRAFAC class myosin-kinesin ATPase superfamily. Myosin family.</text>
</comment>
<comment type="sequence caution" evidence="9">
    <conflict type="erroneous gene model prediction">
        <sequence resource="EMBL-CDS" id="AAA28124"/>
    </conflict>
</comment>
<keyword id="KW-0002">3D-structure</keyword>
<keyword id="KW-0009">Actin-binding</keyword>
<keyword id="KW-0067">ATP-binding</keyword>
<keyword id="KW-0175">Coiled coil</keyword>
<keyword id="KW-0963">Cytoplasm</keyword>
<keyword id="KW-0488">Methylation</keyword>
<keyword id="KW-0505">Motor protein</keyword>
<keyword id="KW-0514">Muscle protein</keyword>
<keyword id="KW-0518">Myosin</keyword>
<keyword id="KW-0547">Nucleotide-binding</keyword>
<keyword id="KW-1185">Reference proteome</keyword>
<keyword id="KW-0787">Thick filament</keyword>
<keyword id="KW-0832">Ubl conjugation</keyword>
<evidence type="ECO:0000250" key="1"/>
<evidence type="ECO:0000255" key="2"/>
<evidence type="ECO:0000255" key="3">
    <source>
        <dbReference type="PROSITE-ProRule" id="PRU00782"/>
    </source>
</evidence>
<evidence type="ECO:0000255" key="4">
    <source>
        <dbReference type="PROSITE-ProRule" id="PRU01190"/>
    </source>
</evidence>
<evidence type="ECO:0000256" key="5">
    <source>
        <dbReference type="SAM" id="MobiDB-lite"/>
    </source>
</evidence>
<evidence type="ECO:0000269" key="6">
    <source>
    </source>
</evidence>
<evidence type="ECO:0000269" key="7">
    <source>
    </source>
</evidence>
<evidence type="ECO:0000269" key="8">
    <source>
    </source>
</evidence>
<evidence type="ECO:0000305" key="9"/>
<evidence type="ECO:0007829" key="10">
    <source>
        <dbReference type="PDB" id="6QDJ"/>
    </source>
</evidence>
<dbReference type="EMBL" id="J01050">
    <property type="protein sequence ID" value="AAA28124.1"/>
    <property type="status" value="ALT_SEQ"/>
    <property type="molecule type" value="Genomic_DNA"/>
</dbReference>
<dbReference type="EMBL" id="Z81499">
    <property type="protein sequence ID" value="CAB04089.1"/>
    <property type="molecule type" value="Genomic_DNA"/>
</dbReference>
<dbReference type="EMBL" id="Z83107">
    <property type="protein sequence ID" value="CAB04089.1"/>
    <property type="status" value="JOINED"/>
    <property type="molecule type" value="Genomic_DNA"/>
</dbReference>
<dbReference type="EMBL" id="V01494">
    <property type="protein sequence ID" value="CAA24738.1"/>
    <property type="molecule type" value="Genomic_DNA"/>
</dbReference>
<dbReference type="PIR" id="T20770">
    <property type="entry name" value="MWKW"/>
</dbReference>
<dbReference type="RefSeq" id="NP_493596.1">
    <property type="nucleotide sequence ID" value="NM_061195.7"/>
</dbReference>
<dbReference type="PDB" id="6QDJ">
    <property type="method" value="X-ray"/>
    <property type="resolution" value="1.88 A"/>
    <property type="chains" value="A=1-790"/>
</dbReference>
<dbReference type="PDBsum" id="6QDJ"/>
<dbReference type="SMR" id="P02566"/>
<dbReference type="BioGRID" id="56866">
    <property type="interactions" value="32"/>
</dbReference>
<dbReference type="DIP" id="DIP-26548N"/>
<dbReference type="FunCoup" id="P02566">
    <property type="interactions" value="160"/>
</dbReference>
<dbReference type="IntAct" id="P02566">
    <property type="interactions" value="6"/>
</dbReference>
<dbReference type="MINT" id="P02566"/>
<dbReference type="STRING" id="6239.F11C3.3.2"/>
<dbReference type="iPTMnet" id="P02566"/>
<dbReference type="PaxDb" id="6239-F11C3.3.1"/>
<dbReference type="PeptideAtlas" id="P02566"/>
<dbReference type="EnsemblMetazoa" id="F11C3.3.1">
    <property type="protein sequence ID" value="F11C3.3.1"/>
    <property type="gene ID" value="WBGene00006789"/>
</dbReference>
<dbReference type="GeneID" id="259839"/>
<dbReference type="KEGG" id="cel:CELE_F11C3.3"/>
<dbReference type="UCSC" id="F11C3.3.1">
    <property type="organism name" value="c. elegans"/>
</dbReference>
<dbReference type="AGR" id="WB:WBGene00006789"/>
<dbReference type="CTD" id="259839"/>
<dbReference type="WormBase" id="F11C3.3">
    <property type="protein sequence ID" value="CE09349"/>
    <property type="gene ID" value="WBGene00006789"/>
    <property type="gene designation" value="unc-54"/>
</dbReference>
<dbReference type="eggNOG" id="KOG0161">
    <property type="taxonomic scope" value="Eukaryota"/>
</dbReference>
<dbReference type="GeneTree" id="ENSGT00970000196537"/>
<dbReference type="HOGENOM" id="CLU_000192_8_0_1"/>
<dbReference type="InParanoid" id="P02566"/>
<dbReference type="OMA" id="RCYFASK"/>
<dbReference type="OrthoDB" id="6108017at2759"/>
<dbReference type="PhylomeDB" id="P02566"/>
<dbReference type="PRO" id="PR:P02566"/>
<dbReference type="Proteomes" id="UP000001940">
    <property type="component" value="Chromosome I"/>
</dbReference>
<dbReference type="Bgee" id="WBGene00006789">
    <property type="expression patterns" value="Expressed in larva and 6 other cell types or tissues"/>
</dbReference>
<dbReference type="GO" id="GO:0031672">
    <property type="term" value="C:A band"/>
    <property type="evidence" value="ECO:0000314"/>
    <property type="project" value="UniProtKB"/>
</dbReference>
<dbReference type="GO" id="GO:0005737">
    <property type="term" value="C:cytoplasm"/>
    <property type="evidence" value="ECO:0000318"/>
    <property type="project" value="GO_Central"/>
</dbReference>
<dbReference type="GO" id="GO:0005859">
    <property type="term" value="C:muscle myosin complex"/>
    <property type="evidence" value="ECO:0000314"/>
    <property type="project" value="WormBase"/>
</dbReference>
<dbReference type="GO" id="GO:0032982">
    <property type="term" value="C:myosin filament"/>
    <property type="evidence" value="ECO:0000318"/>
    <property type="project" value="GO_Central"/>
</dbReference>
<dbReference type="GO" id="GO:0016460">
    <property type="term" value="C:myosin II complex"/>
    <property type="evidence" value="ECO:0000318"/>
    <property type="project" value="GO_Central"/>
</dbReference>
<dbReference type="GO" id="GO:0005863">
    <property type="term" value="C:striated muscle myosin thick filament"/>
    <property type="evidence" value="ECO:0000314"/>
    <property type="project" value="UniProtKB"/>
</dbReference>
<dbReference type="GO" id="GO:0051015">
    <property type="term" value="F:actin filament binding"/>
    <property type="evidence" value="ECO:0000314"/>
    <property type="project" value="WormBase"/>
</dbReference>
<dbReference type="GO" id="GO:0005524">
    <property type="term" value="F:ATP binding"/>
    <property type="evidence" value="ECO:0007669"/>
    <property type="project" value="UniProtKB-KW"/>
</dbReference>
<dbReference type="GO" id="GO:0000146">
    <property type="term" value="F:microfilament motor activity"/>
    <property type="evidence" value="ECO:0000314"/>
    <property type="project" value="WormBase"/>
</dbReference>
<dbReference type="GO" id="GO:0008307">
    <property type="term" value="F:structural constituent of muscle"/>
    <property type="evidence" value="ECO:0000314"/>
    <property type="project" value="WormBase"/>
</dbReference>
<dbReference type="GO" id="GO:0018991">
    <property type="term" value="P:egg-laying behavior"/>
    <property type="evidence" value="ECO:0000315"/>
    <property type="project" value="WormBase"/>
</dbReference>
<dbReference type="GO" id="GO:0040011">
    <property type="term" value="P:locomotion"/>
    <property type="evidence" value="ECO:0000315"/>
    <property type="project" value="WormBase"/>
</dbReference>
<dbReference type="GO" id="GO:0006936">
    <property type="term" value="P:muscle contraction"/>
    <property type="evidence" value="ECO:0000315"/>
    <property type="project" value="WormBase"/>
</dbReference>
<dbReference type="GO" id="GO:0045214">
    <property type="term" value="P:sarcomere organization"/>
    <property type="evidence" value="ECO:0000318"/>
    <property type="project" value="GO_Central"/>
</dbReference>
<dbReference type="GO" id="GO:0030241">
    <property type="term" value="P:skeletal muscle myosin thick filament assembly"/>
    <property type="evidence" value="ECO:0000315"/>
    <property type="project" value="WormBase"/>
</dbReference>
<dbReference type="CDD" id="cd01377">
    <property type="entry name" value="MYSc_class_II"/>
    <property type="match status" value="1"/>
</dbReference>
<dbReference type="FunFam" id="1.10.10.820:FF:000001">
    <property type="entry name" value="Myosin heavy chain"/>
    <property type="match status" value="1"/>
</dbReference>
<dbReference type="FunFam" id="1.20.5.340:FF:000036">
    <property type="entry name" value="Myosin heavy chain"/>
    <property type="match status" value="1"/>
</dbReference>
<dbReference type="FunFam" id="1.20.5.370:FF:000008">
    <property type="entry name" value="Myosin heavy chain"/>
    <property type="match status" value="1"/>
</dbReference>
<dbReference type="FunFam" id="1.20.58.530:FF:000001">
    <property type="entry name" value="Myosin heavy chain"/>
    <property type="match status" value="1"/>
</dbReference>
<dbReference type="FunFam" id="2.30.30.360:FF:000001">
    <property type="entry name" value="Myosin heavy chain"/>
    <property type="match status" value="1"/>
</dbReference>
<dbReference type="FunFam" id="1.20.5.4820:FF:000002">
    <property type="entry name" value="Myosin heavy chain 10"/>
    <property type="match status" value="1"/>
</dbReference>
<dbReference type="FunFam" id="1.20.5.340:FF:000021">
    <property type="entry name" value="Myosin heavy chain, isoform G"/>
    <property type="match status" value="1"/>
</dbReference>
<dbReference type="FunFam" id="1.20.5.340:FF:000025">
    <property type="entry name" value="Myosin heavy chain, isoform G"/>
    <property type="match status" value="1"/>
</dbReference>
<dbReference type="FunFam" id="1.20.5.370:FF:000009">
    <property type="entry name" value="Myosin heavy chain, isoform G"/>
    <property type="match status" value="1"/>
</dbReference>
<dbReference type="FunFam" id="1.20.5.370:FF:000010">
    <property type="entry name" value="Myosin heavy chain, isoform G"/>
    <property type="match status" value="1"/>
</dbReference>
<dbReference type="FunFam" id="3.40.850.10:FF:000024">
    <property type="entry name" value="Myosin heavy chain, isoform J"/>
    <property type="match status" value="1"/>
</dbReference>
<dbReference type="FunFam" id="1.20.120.720:FF:000001">
    <property type="entry name" value="Myosin heavy chain, muscle"/>
    <property type="match status" value="1"/>
</dbReference>
<dbReference type="Gene3D" id="1.10.10.820">
    <property type="match status" value="1"/>
</dbReference>
<dbReference type="Gene3D" id="1.20.5.340">
    <property type="match status" value="4"/>
</dbReference>
<dbReference type="Gene3D" id="1.20.5.370">
    <property type="match status" value="4"/>
</dbReference>
<dbReference type="Gene3D" id="1.20.5.4820">
    <property type="match status" value="1"/>
</dbReference>
<dbReference type="Gene3D" id="1.20.58.530">
    <property type="match status" value="1"/>
</dbReference>
<dbReference type="Gene3D" id="3.40.850.10">
    <property type="entry name" value="Kinesin motor domain"/>
    <property type="match status" value="1"/>
</dbReference>
<dbReference type="Gene3D" id="2.30.30.360">
    <property type="entry name" value="Myosin S1 fragment, N-terminal"/>
    <property type="match status" value="1"/>
</dbReference>
<dbReference type="Gene3D" id="1.20.120.720">
    <property type="entry name" value="Myosin VI head, motor domain, U50 subdomain"/>
    <property type="match status" value="1"/>
</dbReference>
<dbReference type="InterPro" id="IPR036961">
    <property type="entry name" value="Kinesin_motor_dom_sf"/>
</dbReference>
<dbReference type="InterPro" id="IPR001609">
    <property type="entry name" value="Myosin_head_motor_dom-like"/>
</dbReference>
<dbReference type="InterPro" id="IPR004009">
    <property type="entry name" value="Myosin_N"/>
</dbReference>
<dbReference type="InterPro" id="IPR008989">
    <property type="entry name" value="Myosin_S1_N"/>
</dbReference>
<dbReference type="InterPro" id="IPR002928">
    <property type="entry name" value="Myosin_tail"/>
</dbReference>
<dbReference type="InterPro" id="IPR027417">
    <property type="entry name" value="P-loop_NTPase"/>
</dbReference>
<dbReference type="InterPro" id="IPR014751">
    <property type="entry name" value="XRCC4-like_C"/>
</dbReference>
<dbReference type="PANTHER" id="PTHR45615:SF58">
    <property type="entry name" value="HOLOCENTRIC CHROMOSOME BINDING PROTEIN-RELATED"/>
    <property type="match status" value="1"/>
</dbReference>
<dbReference type="PANTHER" id="PTHR45615">
    <property type="entry name" value="MYOSIN HEAVY CHAIN, NON-MUSCLE"/>
    <property type="match status" value="1"/>
</dbReference>
<dbReference type="Pfam" id="PF00063">
    <property type="entry name" value="Myosin_head"/>
    <property type="match status" value="1"/>
</dbReference>
<dbReference type="Pfam" id="PF02736">
    <property type="entry name" value="Myosin_N"/>
    <property type="match status" value="1"/>
</dbReference>
<dbReference type="Pfam" id="PF01576">
    <property type="entry name" value="Myosin_tail_1"/>
    <property type="match status" value="1"/>
</dbReference>
<dbReference type="PRINTS" id="PR00193">
    <property type="entry name" value="MYOSINHEAVY"/>
</dbReference>
<dbReference type="SMART" id="SM00242">
    <property type="entry name" value="MYSc"/>
    <property type="match status" value="1"/>
</dbReference>
<dbReference type="SUPFAM" id="SSF90257">
    <property type="entry name" value="Myosin rod fragments"/>
    <property type="match status" value="5"/>
</dbReference>
<dbReference type="SUPFAM" id="SSF52540">
    <property type="entry name" value="P-loop containing nucleoside triphosphate hydrolases"/>
    <property type="match status" value="1"/>
</dbReference>
<dbReference type="SUPFAM" id="SSF57997">
    <property type="entry name" value="Tropomyosin"/>
    <property type="match status" value="1"/>
</dbReference>
<dbReference type="PROSITE" id="PS51456">
    <property type="entry name" value="MYOSIN_MOTOR"/>
    <property type="match status" value="1"/>
</dbReference>
<dbReference type="PROSITE" id="PS51844">
    <property type="entry name" value="SH3_LIKE"/>
    <property type="match status" value="1"/>
</dbReference>
<accession>P02566</accession>
<accession>O02244</accession>